<comment type="function">
    <text evidence="1">Negative regulator of class I heat shock genes (grpE-dnaK-dnaJ and groELS operons). Prevents heat-shock induction of these operons.</text>
</comment>
<comment type="similarity">
    <text evidence="1">Belongs to the HrcA family.</text>
</comment>
<feature type="chain" id="PRO_1000092793" description="Heat-inducible transcription repressor HrcA">
    <location>
        <begin position="1"/>
        <end position="372"/>
    </location>
</feature>
<feature type="region of interest" description="Disordered" evidence="2">
    <location>
        <begin position="300"/>
        <end position="334"/>
    </location>
</feature>
<reference key="1">
    <citation type="journal article" date="2008" name="BMC Genomics">
        <title>Comparative genomic analysis of the gut bacterium Bifidobacterium longum reveals loci susceptible to deletion during pure culture growth.</title>
        <authorList>
            <person name="Lee J.H."/>
            <person name="Karamychev V.N."/>
            <person name="Kozyavkin S.A."/>
            <person name="Mills D."/>
            <person name="Pavlov A.R."/>
            <person name="Pavlova N.V."/>
            <person name="Polouchine N.N."/>
            <person name="Richardson P.M."/>
            <person name="Shakhova V.V."/>
            <person name="Slesarev A.I."/>
            <person name="Weimer B."/>
            <person name="O'Sullivan D.J."/>
        </authorList>
    </citation>
    <scope>NUCLEOTIDE SEQUENCE [LARGE SCALE GENOMIC DNA]</scope>
    <source>
        <strain>DJO10A</strain>
    </source>
</reference>
<organism>
    <name type="scientific">Bifidobacterium longum (strain DJO10A)</name>
    <dbReference type="NCBI Taxonomy" id="205913"/>
    <lineage>
        <taxon>Bacteria</taxon>
        <taxon>Bacillati</taxon>
        <taxon>Actinomycetota</taxon>
        <taxon>Actinomycetes</taxon>
        <taxon>Bifidobacteriales</taxon>
        <taxon>Bifidobacteriaceae</taxon>
        <taxon>Bifidobacterium</taxon>
    </lineage>
</organism>
<dbReference type="EMBL" id="CP000605">
    <property type="protein sequence ID" value="ACD97889.1"/>
    <property type="molecule type" value="Genomic_DNA"/>
</dbReference>
<dbReference type="RefSeq" id="WP_007054286.1">
    <property type="nucleotide sequence ID" value="NZ_AABM02000001.1"/>
</dbReference>
<dbReference type="SMR" id="B3DRX0"/>
<dbReference type="KEGG" id="blj:BLD_0443"/>
<dbReference type="HOGENOM" id="CLU_050019_2_0_11"/>
<dbReference type="Proteomes" id="UP000002419">
    <property type="component" value="Chromosome"/>
</dbReference>
<dbReference type="GO" id="GO:0003677">
    <property type="term" value="F:DNA binding"/>
    <property type="evidence" value="ECO:0007669"/>
    <property type="project" value="InterPro"/>
</dbReference>
<dbReference type="GO" id="GO:0045892">
    <property type="term" value="P:negative regulation of DNA-templated transcription"/>
    <property type="evidence" value="ECO:0007669"/>
    <property type="project" value="UniProtKB-UniRule"/>
</dbReference>
<dbReference type="FunFam" id="1.10.10.10:FF:000049">
    <property type="entry name" value="Heat-inducible transcription repressor HrcA"/>
    <property type="match status" value="1"/>
</dbReference>
<dbReference type="Gene3D" id="3.30.450.40">
    <property type="match status" value="1"/>
</dbReference>
<dbReference type="Gene3D" id="3.30.390.60">
    <property type="entry name" value="Heat-inducible transcription repressor hrca homolog, domain 3"/>
    <property type="match status" value="1"/>
</dbReference>
<dbReference type="Gene3D" id="1.10.10.10">
    <property type="entry name" value="Winged helix-like DNA-binding domain superfamily/Winged helix DNA-binding domain"/>
    <property type="match status" value="1"/>
</dbReference>
<dbReference type="HAMAP" id="MF_00081">
    <property type="entry name" value="HrcA"/>
    <property type="match status" value="1"/>
</dbReference>
<dbReference type="InterPro" id="IPR029016">
    <property type="entry name" value="GAF-like_dom_sf"/>
</dbReference>
<dbReference type="InterPro" id="IPR002571">
    <property type="entry name" value="HrcA"/>
</dbReference>
<dbReference type="InterPro" id="IPR021153">
    <property type="entry name" value="HrcA_C"/>
</dbReference>
<dbReference type="InterPro" id="IPR036388">
    <property type="entry name" value="WH-like_DNA-bd_sf"/>
</dbReference>
<dbReference type="InterPro" id="IPR036390">
    <property type="entry name" value="WH_DNA-bd_sf"/>
</dbReference>
<dbReference type="InterPro" id="IPR023120">
    <property type="entry name" value="WHTH_transcript_rep_HrcA_IDD"/>
</dbReference>
<dbReference type="NCBIfam" id="TIGR00331">
    <property type="entry name" value="hrcA"/>
    <property type="match status" value="1"/>
</dbReference>
<dbReference type="PANTHER" id="PTHR34824">
    <property type="entry name" value="HEAT-INDUCIBLE TRANSCRIPTION REPRESSOR HRCA"/>
    <property type="match status" value="1"/>
</dbReference>
<dbReference type="PANTHER" id="PTHR34824:SF1">
    <property type="entry name" value="HEAT-INDUCIBLE TRANSCRIPTION REPRESSOR HRCA"/>
    <property type="match status" value="1"/>
</dbReference>
<dbReference type="Pfam" id="PF01628">
    <property type="entry name" value="HrcA"/>
    <property type="match status" value="1"/>
</dbReference>
<dbReference type="PIRSF" id="PIRSF005485">
    <property type="entry name" value="HrcA"/>
    <property type="match status" value="1"/>
</dbReference>
<dbReference type="SUPFAM" id="SSF55781">
    <property type="entry name" value="GAF domain-like"/>
    <property type="match status" value="2"/>
</dbReference>
<dbReference type="SUPFAM" id="SSF46785">
    <property type="entry name" value="Winged helix' DNA-binding domain"/>
    <property type="match status" value="1"/>
</dbReference>
<gene>
    <name evidence="1" type="primary">hrcA</name>
    <name type="ordered locus">BLD_0443</name>
</gene>
<proteinExistence type="inferred from homology"/>
<sequence length="372" mass="39426">MTQSRRMLVLRAVVEDYIRSQEPVGSTSLTRDHDLGVSSATIRNDMAALEDEGYLIQPHTSAGRVPTEKGYRYFVDRLATVVPLSEAQRRGINSFLSGSVSLKDALQRSARLLSEITGQVAVVASPSLAKATLRHVEMVPVAMTTLLAVVITDTGRVAQHGLTIASMPAVDEINRLSNTVNEQCDGLSLSKSAETVRSIAASAGYESVRGVADALADAFESMALDERANELYMSGTSHLAHSRSLADLAPLFDALEEQVVLMKLMSNLSEETNASGVGVAIGSEMHTPGLLHASVVSSGYGRSGAAGEPAGNDPVGEPETESETESQTNDTEPIAFVGSIGPTHMDYAATMAAVRAVARYLTAFLSEGRTQD</sequence>
<accession>B3DRX0</accession>
<evidence type="ECO:0000255" key="1">
    <source>
        <dbReference type="HAMAP-Rule" id="MF_00081"/>
    </source>
</evidence>
<evidence type="ECO:0000256" key="2">
    <source>
        <dbReference type="SAM" id="MobiDB-lite"/>
    </source>
</evidence>
<protein>
    <recommendedName>
        <fullName evidence="1">Heat-inducible transcription repressor HrcA</fullName>
    </recommendedName>
</protein>
<keyword id="KW-0678">Repressor</keyword>
<keyword id="KW-0346">Stress response</keyword>
<keyword id="KW-0804">Transcription</keyword>
<keyword id="KW-0805">Transcription regulation</keyword>
<name>HRCA_BIFLD</name>